<feature type="chain" id="PRO_0000095618" description="RNA-binding protein Hfq">
    <location>
        <begin position="1"/>
        <end position="78"/>
    </location>
</feature>
<feature type="domain" description="Sm" evidence="2">
    <location>
        <begin position="9"/>
        <end position="69"/>
    </location>
</feature>
<organism>
    <name type="scientific">Halalkalibacterium halodurans (strain ATCC BAA-125 / DSM 18197 / FERM 7344 / JCM 9153 / C-125)</name>
    <name type="common">Bacillus halodurans</name>
    <dbReference type="NCBI Taxonomy" id="272558"/>
    <lineage>
        <taxon>Bacteria</taxon>
        <taxon>Bacillati</taxon>
        <taxon>Bacillota</taxon>
        <taxon>Bacilli</taxon>
        <taxon>Bacillales</taxon>
        <taxon>Bacillaceae</taxon>
        <taxon>Halalkalibacterium (ex Joshi et al. 2022)</taxon>
    </lineage>
</organism>
<evidence type="ECO:0000255" key="1">
    <source>
        <dbReference type="HAMAP-Rule" id="MF_00436"/>
    </source>
</evidence>
<evidence type="ECO:0000255" key="2">
    <source>
        <dbReference type="PROSITE-ProRule" id="PRU01346"/>
    </source>
</evidence>
<protein>
    <recommendedName>
        <fullName evidence="1">RNA-binding protein Hfq</fullName>
    </recommendedName>
</protein>
<reference key="1">
    <citation type="journal article" date="2000" name="Nucleic Acids Res.">
        <title>Complete genome sequence of the alkaliphilic bacterium Bacillus halodurans and genomic sequence comparison with Bacillus subtilis.</title>
        <authorList>
            <person name="Takami H."/>
            <person name="Nakasone K."/>
            <person name="Takaki Y."/>
            <person name="Maeno G."/>
            <person name="Sasaki R."/>
            <person name="Masui N."/>
            <person name="Fuji F."/>
            <person name="Hirama C."/>
            <person name="Nakamura Y."/>
            <person name="Ogasawara N."/>
            <person name="Kuhara S."/>
            <person name="Horikoshi K."/>
        </authorList>
    </citation>
    <scope>NUCLEOTIDE SEQUENCE [LARGE SCALE GENOMIC DNA]</scope>
    <source>
        <strain>ATCC BAA-125 / DSM 18197 / FERM 7344 / JCM 9153 / C-125</strain>
    </source>
</reference>
<comment type="function">
    <text evidence="1">RNA chaperone that binds small regulatory RNA (sRNAs) and mRNAs to facilitate mRNA translational regulation in response to envelope stress, environmental stress and changes in metabolite concentrations. Also binds with high specificity to tRNAs.</text>
</comment>
<comment type="subunit">
    <text evidence="1">Homohexamer.</text>
</comment>
<comment type="similarity">
    <text evidence="1">Belongs to the Hfq family.</text>
</comment>
<sequence>MKSSVNIQDHFLNQLRKENIPVTVFLLNGFQLRGLVKGFDNFTVILETEGKQQLVYKHAISTFAPQRNVQMKTENEPS</sequence>
<name>HFQ_HALH5</name>
<proteinExistence type="inferred from homology"/>
<gene>
    <name evidence="1" type="primary">hfq</name>
    <name type="ordered locus">BH2365</name>
</gene>
<dbReference type="EMBL" id="BA000004">
    <property type="protein sequence ID" value="BAB06084.1"/>
    <property type="molecule type" value="Genomic_DNA"/>
</dbReference>
<dbReference type="PIR" id="E83945">
    <property type="entry name" value="E83945"/>
</dbReference>
<dbReference type="RefSeq" id="WP_010898519.1">
    <property type="nucleotide sequence ID" value="NC_002570.2"/>
</dbReference>
<dbReference type="SMR" id="Q9KAC4"/>
<dbReference type="STRING" id="272558.gene:10728263"/>
<dbReference type="GeneID" id="87597885"/>
<dbReference type="KEGG" id="bha:BH2365"/>
<dbReference type="eggNOG" id="COG1923">
    <property type="taxonomic scope" value="Bacteria"/>
</dbReference>
<dbReference type="HOGENOM" id="CLU_113688_3_0_9"/>
<dbReference type="OrthoDB" id="9799751at2"/>
<dbReference type="Proteomes" id="UP000001258">
    <property type="component" value="Chromosome"/>
</dbReference>
<dbReference type="GO" id="GO:0005829">
    <property type="term" value="C:cytosol"/>
    <property type="evidence" value="ECO:0007669"/>
    <property type="project" value="TreeGrafter"/>
</dbReference>
<dbReference type="GO" id="GO:0003723">
    <property type="term" value="F:RNA binding"/>
    <property type="evidence" value="ECO:0007669"/>
    <property type="project" value="UniProtKB-UniRule"/>
</dbReference>
<dbReference type="GO" id="GO:0006355">
    <property type="term" value="P:regulation of DNA-templated transcription"/>
    <property type="evidence" value="ECO:0007669"/>
    <property type="project" value="InterPro"/>
</dbReference>
<dbReference type="GO" id="GO:0043487">
    <property type="term" value="P:regulation of RNA stability"/>
    <property type="evidence" value="ECO:0007669"/>
    <property type="project" value="TreeGrafter"/>
</dbReference>
<dbReference type="GO" id="GO:0045974">
    <property type="term" value="P:regulation of translation, ncRNA-mediated"/>
    <property type="evidence" value="ECO:0007669"/>
    <property type="project" value="TreeGrafter"/>
</dbReference>
<dbReference type="CDD" id="cd01716">
    <property type="entry name" value="Hfq"/>
    <property type="match status" value="1"/>
</dbReference>
<dbReference type="FunFam" id="2.30.30.100:FF:000012">
    <property type="entry name" value="RNA-binding protein Hfq"/>
    <property type="match status" value="1"/>
</dbReference>
<dbReference type="Gene3D" id="2.30.30.100">
    <property type="match status" value="1"/>
</dbReference>
<dbReference type="HAMAP" id="MF_00436">
    <property type="entry name" value="Hfq"/>
    <property type="match status" value="1"/>
</dbReference>
<dbReference type="InterPro" id="IPR005001">
    <property type="entry name" value="Hfq"/>
</dbReference>
<dbReference type="InterPro" id="IPR010920">
    <property type="entry name" value="LSM_dom_sf"/>
</dbReference>
<dbReference type="InterPro" id="IPR047575">
    <property type="entry name" value="Sm"/>
</dbReference>
<dbReference type="NCBIfam" id="TIGR02383">
    <property type="entry name" value="Hfq"/>
    <property type="match status" value="1"/>
</dbReference>
<dbReference type="NCBIfam" id="NF001602">
    <property type="entry name" value="PRK00395.1"/>
    <property type="match status" value="1"/>
</dbReference>
<dbReference type="PANTHER" id="PTHR34772">
    <property type="entry name" value="RNA-BINDING PROTEIN HFQ"/>
    <property type="match status" value="1"/>
</dbReference>
<dbReference type="PANTHER" id="PTHR34772:SF1">
    <property type="entry name" value="RNA-BINDING PROTEIN HFQ"/>
    <property type="match status" value="1"/>
</dbReference>
<dbReference type="Pfam" id="PF17209">
    <property type="entry name" value="Hfq"/>
    <property type="match status" value="1"/>
</dbReference>
<dbReference type="SUPFAM" id="SSF50182">
    <property type="entry name" value="Sm-like ribonucleoproteins"/>
    <property type="match status" value="1"/>
</dbReference>
<dbReference type="PROSITE" id="PS52002">
    <property type="entry name" value="SM"/>
    <property type="match status" value="1"/>
</dbReference>
<accession>Q9KAC4</accession>
<keyword id="KW-1185">Reference proteome</keyword>
<keyword id="KW-0694">RNA-binding</keyword>
<keyword id="KW-0346">Stress response</keyword>